<accession>Q95LL7</accession>
<accession>Q95JM7</accession>
<accession>Q95JS8</accession>
<accession>Q95K01</accession>
<gene>
    <name type="primary">RMDN2</name>
    <name type="synonym">FAM82A</name>
    <name type="synonym">FAM82A1</name>
    <name type="ORF">QtsA-11631</name>
    <name type="ORF">QtsA-13801</name>
    <name type="ORF">QtsA-15186</name>
    <name type="ORF">QtsA-20236</name>
</gene>
<dbReference type="EMBL" id="AB070101">
    <property type="protein sequence ID" value="BAB63046.1"/>
    <property type="status" value="ALT_SEQ"/>
    <property type="molecule type" value="mRNA"/>
</dbReference>
<dbReference type="EMBL" id="AB070026">
    <property type="protein sequence ID" value="BAB62971.1"/>
    <property type="molecule type" value="mRNA"/>
</dbReference>
<dbReference type="EMBL" id="AB070154">
    <property type="protein sequence ID" value="BAB63099.1"/>
    <property type="molecule type" value="mRNA"/>
</dbReference>
<dbReference type="EMBL" id="AB072771">
    <property type="protein sequence ID" value="BAB69740.1"/>
    <property type="molecule type" value="mRNA"/>
</dbReference>
<dbReference type="SMR" id="Q95LL7"/>
<dbReference type="STRING" id="9541.ENSMFAP00000009851"/>
<dbReference type="eggNOG" id="ENOG502QS2U">
    <property type="taxonomic scope" value="Eukaryota"/>
</dbReference>
<dbReference type="Proteomes" id="UP000233100">
    <property type="component" value="Unplaced"/>
</dbReference>
<dbReference type="GO" id="GO:0016020">
    <property type="term" value="C:membrane"/>
    <property type="evidence" value="ECO:0007669"/>
    <property type="project" value="UniProtKB-SubCell"/>
</dbReference>
<dbReference type="GO" id="GO:0005739">
    <property type="term" value="C:mitochondrion"/>
    <property type="evidence" value="ECO:0007669"/>
    <property type="project" value="TreeGrafter"/>
</dbReference>
<dbReference type="GO" id="GO:0097431">
    <property type="term" value="C:mitotic spindle pole"/>
    <property type="evidence" value="ECO:0007669"/>
    <property type="project" value="TreeGrafter"/>
</dbReference>
<dbReference type="GO" id="GO:0005876">
    <property type="term" value="C:spindle microtubule"/>
    <property type="evidence" value="ECO:0007669"/>
    <property type="project" value="TreeGrafter"/>
</dbReference>
<dbReference type="GO" id="GO:0008017">
    <property type="term" value="F:microtubule binding"/>
    <property type="evidence" value="ECO:0007669"/>
    <property type="project" value="TreeGrafter"/>
</dbReference>
<dbReference type="FunFam" id="1.25.40.10:FF:000536">
    <property type="entry name" value="Regulator of microtubule dynamics protein 2"/>
    <property type="match status" value="1"/>
</dbReference>
<dbReference type="Gene3D" id="1.25.40.10">
    <property type="entry name" value="Tetratricopeptide repeat domain"/>
    <property type="match status" value="1"/>
</dbReference>
<dbReference type="InterPro" id="IPR049039">
    <property type="entry name" value="RMD1-3_a_helical_rpt"/>
</dbReference>
<dbReference type="InterPro" id="IPR011990">
    <property type="entry name" value="TPR-like_helical_dom_sf"/>
</dbReference>
<dbReference type="PANTHER" id="PTHR16056">
    <property type="entry name" value="REGULATOR OF MICROTUBULE DYNAMICS PROTEIN"/>
    <property type="match status" value="1"/>
</dbReference>
<dbReference type="PANTHER" id="PTHR16056:SF15">
    <property type="entry name" value="REGULATOR OF MICROTUBULE DYNAMICS PROTEIN 2"/>
    <property type="match status" value="1"/>
</dbReference>
<dbReference type="Pfam" id="PF21033">
    <property type="entry name" value="RMD1-3"/>
    <property type="match status" value="1"/>
</dbReference>
<dbReference type="SUPFAM" id="SSF48452">
    <property type="entry name" value="TPR-like"/>
    <property type="match status" value="1"/>
</dbReference>
<evidence type="ECO:0000250" key="1"/>
<evidence type="ECO:0000250" key="2">
    <source>
        <dbReference type="UniProtKB" id="Q498D5"/>
    </source>
</evidence>
<evidence type="ECO:0000250" key="3">
    <source>
        <dbReference type="UniProtKB" id="Q8BSE0"/>
    </source>
</evidence>
<evidence type="ECO:0000250" key="4">
    <source>
        <dbReference type="UniProtKB" id="Q96LZ7"/>
    </source>
</evidence>
<evidence type="ECO:0000255" key="5"/>
<evidence type="ECO:0000256" key="6">
    <source>
        <dbReference type="SAM" id="MobiDB-lite"/>
    </source>
</evidence>
<evidence type="ECO:0000303" key="7">
    <source>
    </source>
</evidence>
<evidence type="ECO:0000303" key="8">
    <source ref="2"/>
</evidence>
<evidence type="ECO:0000305" key="9"/>
<comment type="subunit">
    <text evidence="1">Interacts with microtubules.</text>
</comment>
<comment type="subcellular location">
    <subcellularLocation>
        <location evidence="9">Membrane</location>
        <topology evidence="9">Single-pass membrane protein</topology>
    </subcellularLocation>
    <subcellularLocation>
        <location>Cytoplasm</location>
    </subcellularLocation>
    <subcellularLocation>
        <location evidence="1">Cytoplasm</location>
        <location evidence="1">Cytoskeleton</location>
        <location evidence="1">Spindle</location>
    </subcellularLocation>
    <subcellularLocation>
        <location evidence="1">Cytoplasm</location>
        <location evidence="1">Cytoskeleton</location>
        <location evidence="1">Spindle pole</location>
    </subcellularLocation>
    <text evidence="1">In interphase localizes in the cytoplasm, and during mitosis localizes to the spindle microtubules and spindle poles. Also detected as large dots in the perinuclear region (By similarity).</text>
</comment>
<comment type="alternative products">
    <event type="alternative splicing"/>
    <isoform>
        <id>Q95LL7-1</id>
        <name>1</name>
        <sequence type="displayed"/>
    </isoform>
    <isoform>
        <id>Q95LL7-2</id>
        <name>2</name>
        <sequence type="described" ref="VSP_025528"/>
    </isoform>
    <isoform>
        <id>Q95LL7-3</id>
        <name>3</name>
        <sequence type="described" ref="VSP_025528 VSP_025530"/>
    </isoform>
    <isoform>
        <id>Q95LL7-4</id>
        <name>4</name>
        <sequence type="described" ref="VSP_025528 VSP_025529"/>
    </isoform>
</comment>
<comment type="similarity">
    <text evidence="9">Belongs to the RMDN family.</text>
</comment>
<comment type="sequence caution" evidence="9">
    <molecule>Isoform 2</molecule>
    <conflict type="miscellaneous discrepancy">
        <sequence resource="EMBL-CDS" id="BAB63046"/>
    </conflict>
    <text>a stop codon at position 16 which was translated as Arg to extend the sequence and a stop codon at position 125 which was translated as Arg to extend the sequence.</text>
</comment>
<sequence length="410" mass="47493">MPHSTNKELIFGIMVGTAGISLLLLWYHKVRKPEKTMKLPKFLSLDNTFNSITLQDEVHNDQGTTVIFQERQLQILEKLNELLTNMEELKEEIRFLKETVPKLEEYIQDELGGKITVHKVSPQHRARKRRLPTIQSSATSNSSEEAESEGGYITANTDTEEQSFPVPKAFNTHVEELNLDVLLQKVDHLRMSESGKSESFELLCDHKEKFRDKIEFMWRFARAYGDMYELSTNTQEKKHYANIGRTLSERAINRAPMNGHCHLWYAVLCGYVSEFEGLQNKINYGHLFKEHLDIAIKLLPEEPFLYYLKGRYCYTVSKLSWIEKKMAATLFGKIPSSTVQEALHNFLKAEELCPGYSNPNYMYLAKCYADLEENQNALKFCNLALLLPTVTKEDKEAQKEMQKIMTSLKR</sequence>
<protein>
    <recommendedName>
        <fullName>Regulator of microtubule dynamics protein 2</fullName>
        <shortName>RMD-2</shortName>
    </recommendedName>
    <alternativeName>
        <fullName>Protein FAM82A1</fullName>
    </alternativeName>
</protein>
<proteinExistence type="evidence at transcript level"/>
<feature type="chain" id="PRO_0000287505" description="Regulator of microtubule dynamics protein 2">
    <location>
        <begin position="1"/>
        <end position="410"/>
    </location>
</feature>
<feature type="transmembrane region" description="Helical" evidence="5">
    <location>
        <begin position="10"/>
        <end position="27"/>
    </location>
</feature>
<feature type="region of interest" description="Disordered" evidence="6">
    <location>
        <begin position="122"/>
        <end position="151"/>
    </location>
</feature>
<feature type="coiled-coil region" evidence="5">
    <location>
        <begin position="68"/>
        <end position="110"/>
    </location>
</feature>
<feature type="compositionally biased region" description="Basic residues" evidence="6">
    <location>
        <begin position="122"/>
        <end position="131"/>
    </location>
</feature>
<feature type="modified residue" description="Phosphoserine" evidence="3">
    <location>
        <position position="51"/>
    </location>
</feature>
<feature type="modified residue" description="Phosphoserine" evidence="2">
    <location>
        <position position="121"/>
    </location>
</feature>
<feature type="modified residue" description="Phosphothreonine" evidence="4">
    <location>
        <position position="139"/>
    </location>
</feature>
<feature type="modified residue" description="Phosphotyrosine" evidence="4">
    <location>
        <position position="152"/>
    </location>
</feature>
<feature type="modified residue" description="Phosphothreonine" evidence="4">
    <location>
        <position position="154"/>
    </location>
</feature>
<feature type="modified residue" description="Phosphothreonine" evidence="4">
    <location>
        <position position="157"/>
    </location>
</feature>
<feature type="splice variant" id="VSP_025528" description="In isoform 2, isoform 3 and isoform 4." evidence="7 8">
    <original>MPHSTNKELIFGIMVGTAGISLLLLWYHKVRKPEKTMKLPKFLSLDNTFNSITLQDEVHNDQGTTVIFQERQLQILEKLNELLTNMEELKEEIRFLKETVPKLEEYIQDELGGKITVHKVSPQHRARKRRLPTIQSSATSNSSEEAESEGG</original>
    <variation>MGKCLSCCKEDQSFQRCSPEDQVTTDAQHRGASSISQPNISLGHKTSYSPITRKVNSAKASRRLLSLSSPSFSERRCSLFVGFQNRNASSYRQQSTANFDSEEDTSFTDLKSSSDHFGSFMSCRRRFSSRKLSIVSYYKSANFFDPQASGQNVFNLKEIEIFSKTSNNTDAKKHITISAPEYNTKNFKNFETNTTFPAFGNTIDTASYQQSTSSFFSLANDVSSPDQQNGIATDIQQRGQLCKDLKDFLHPGTESYSTDRSAITIQQHPSQSGTFPFLHKAGFSSSYKNSGCFIPFQNEVTSGPSEDEDFAVLFQDEDRSSPIEIPKIR</variation>
    <location>
        <begin position="1"/>
        <end position="151"/>
    </location>
</feature>
<feature type="splice variant" id="VSP_025529" description="In isoform 4." evidence="8">
    <location>
        <begin position="394"/>
        <end position="410"/>
    </location>
</feature>
<feature type="splice variant" id="VSP_025530" description="In isoform 3." evidence="7">
    <location>
        <begin position="404"/>
        <end position="410"/>
    </location>
</feature>
<feature type="sequence conflict" description="In Ref. 2; BAB69740." evidence="9" ref="2">
    <original>E</original>
    <variation>K</variation>
    <location>
        <position position="161"/>
    </location>
</feature>
<feature type="sequence conflict" description="In Ref. 2; BAB62971." evidence="9" ref="2">
    <original>K</original>
    <variation>E</variation>
    <location>
        <position position="213"/>
    </location>
</feature>
<keyword id="KW-0025">Alternative splicing</keyword>
<keyword id="KW-0175">Coiled coil</keyword>
<keyword id="KW-0963">Cytoplasm</keyword>
<keyword id="KW-0206">Cytoskeleton</keyword>
<keyword id="KW-0472">Membrane</keyword>
<keyword id="KW-0493">Microtubule</keyword>
<keyword id="KW-0597">Phosphoprotein</keyword>
<keyword id="KW-1185">Reference proteome</keyword>
<keyword id="KW-0812">Transmembrane</keyword>
<keyword id="KW-1133">Transmembrane helix</keyword>
<reference key="1">
    <citation type="journal article" date="2002" name="BMC Genomics">
        <title>Cynomolgus monkey testicular cDNAs for discovery of novel human genes in the human genome sequence.</title>
        <authorList>
            <person name="Osada N."/>
            <person name="Hida M."/>
            <person name="Kusuda J."/>
            <person name="Tanuma R."/>
            <person name="Hirata M."/>
            <person name="Suto Y."/>
            <person name="Hirai M."/>
            <person name="Terao K."/>
            <person name="Sugano S."/>
            <person name="Hashimoto K."/>
        </authorList>
    </citation>
    <scope>NUCLEOTIDE SEQUENCE [LARGE SCALE MRNA] (ISOFORM 3)</scope>
    <source>
        <tissue>Testis</tissue>
    </source>
</reference>
<reference key="2">
    <citation type="submission" date="2005-06" db="EMBL/GenBank/DDBJ databases">
        <title>DNA sequences of macaque genes expressed in brain or testis and its evolutionary implications.</title>
        <authorList>
            <consortium name="International consortium for macaque cDNA sequencing and analysis"/>
        </authorList>
    </citation>
    <scope>NUCLEOTIDE SEQUENCE [LARGE SCALE MRNA] (ISOFORMS 1; 2 AND 4)</scope>
    <source>
        <tissue>Testis</tissue>
    </source>
</reference>
<organism>
    <name type="scientific">Macaca fascicularis</name>
    <name type="common">Crab-eating macaque</name>
    <name type="synonym">Cynomolgus monkey</name>
    <dbReference type="NCBI Taxonomy" id="9541"/>
    <lineage>
        <taxon>Eukaryota</taxon>
        <taxon>Metazoa</taxon>
        <taxon>Chordata</taxon>
        <taxon>Craniata</taxon>
        <taxon>Vertebrata</taxon>
        <taxon>Euteleostomi</taxon>
        <taxon>Mammalia</taxon>
        <taxon>Eutheria</taxon>
        <taxon>Euarchontoglires</taxon>
        <taxon>Primates</taxon>
        <taxon>Haplorrhini</taxon>
        <taxon>Catarrhini</taxon>
        <taxon>Cercopithecidae</taxon>
        <taxon>Cercopithecinae</taxon>
        <taxon>Macaca</taxon>
    </lineage>
</organism>
<name>RMD2_MACFA</name>